<name>PURL_PYRFU</name>
<keyword id="KW-0067">ATP-binding</keyword>
<keyword id="KW-0963">Cytoplasm</keyword>
<keyword id="KW-0436">Ligase</keyword>
<keyword id="KW-0460">Magnesium</keyword>
<keyword id="KW-0479">Metal-binding</keyword>
<keyword id="KW-0547">Nucleotide-binding</keyword>
<keyword id="KW-0658">Purine biosynthesis</keyword>
<keyword id="KW-1185">Reference proteome</keyword>
<proteinExistence type="inferred from homology"/>
<accession>Q8U491</accession>
<sequence length="704" mass="78229">MFPHEEKLIREKLGREPNDLEKAMLEVMWSEHVSYKSSRKWLKLLPTKNEHVILGPGEDAGIIKFDDKTWIVIGIESHNHPSAVEPYGGAATGVGGIVRDILCMGARPIALLDPIRFGPLEKEKNRYLFEYVVKGIADYGNRIGVPTVGGETEFDESLDNYTLVNVACIGIMRPEHLVHSYVTEPGLKLVIVGNRTGRDGIHGVTFASEELGENAEEEDRSAVQIPDPFTEKLLIEATLEAVYTGKVKALKDLGGGGLTCAASEMVGKRGFGAIIYADKVPLREPGMTPLEVMISESQERMLFAIKPEDVEELGKIFEKYELEWSVVGEVIEEPKFIVYWKGRKVAELPIELLTNVPTIEWPMKEYRIEEDVETPQISLEEAFEKVWRSPNVISKRWVWEQYDHEVQGRTVIKPGFDSAVLKINEEYGLAITADGNPTHCYLNPYHGAMGVVVEVVRNLVSVGAKPLALVDNLNFASPERPEVYWSFVETIKGLADAAKAFGLAYVSGNVSFYNEVVNKPVKPTPVVAGVGKVKLEKIPRGPREGDLIGLIGETRKELGGSELYRVLGVSKGIAPRVDLEVEKRNAESVLKLIEEGLVSFVHDVSRGGVAVALAELSTWFNVGIKSEITTSLLPLDFAFSESHGRYIVTFPEENLEAVKKIAPITLLGRIGGEKFELKINGEKVSKTVKWLSDVHWNELYRIMD</sequence>
<reference key="1">
    <citation type="journal article" date="1999" name="Genetics">
        <title>Divergence of the hyperthermophilic archaea Pyrococcus furiosus and P. horikoshii inferred from complete genomic sequences.</title>
        <authorList>
            <person name="Maeder D.L."/>
            <person name="Weiss R.B."/>
            <person name="Dunn D.M."/>
            <person name="Cherry J.L."/>
            <person name="Gonzalez J.M."/>
            <person name="DiRuggiero J."/>
            <person name="Robb F.T."/>
        </authorList>
    </citation>
    <scope>NUCLEOTIDE SEQUENCE [LARGE SCALE GENOMIC DNA]</scope>
    <source>
        <strain>ATCC 43587 / DSM 3638 / JCM 8422 / Vc1</strain>
    </source>
</reference>
<comment type="function">
    <text evidence="1">Part of the phosphoribosylformylglycinamidine synthase complex involved in the purines biosynthetic pathway. Catalyzes the ATP-dependent conversion of formylglycinamide ribonucleotide (FGAR) and glutamine to yield formylglycinamidine ribonucleotide (FGAM) and glutamate. The FGAM synthase complex is composed of three subunits. PurQ produces an ammonia molecule by converting glutamine to glutamate. PurL transfers the ammonia molecule to FGAR to form FGAM in an ATP-dependent manner. PurS interacts with PurQ and PurL and is thought to assist in the transfer of the ammonia molecule from PurQ to PurL.</text>
</comment>
<comment type="catalytic activity">
    <reaction evidence="1">
        <text>N(2)-formyl-N(1)-(5-phospho-beta-D-ribosyl)glycinamide + L-glutamine + ATP + H2O = 2-formamido-N(1)-(5-O-phospho-beta-D-ribosyl)acetamidine + L-glutamate + ADP + phosphate + H(+)</text>
        <dbReference type="Rhea" id="RHEA:17129"/>
        <dbReference type="ChEBI" id="CHEBI:15377"/>
        <dbReference type="ChEBI" id="CHEBI:15378"/>
        <dbReference type="ChEBI" id="CHEBI:29985"/>
        <dbReference type="ChEBI" id="CHEBI:30616"/>
        <dbReference type="ChEBI" id="CHEBI:43474"/>
        <dbReference type="ChEBI" id="CHEBI:58359"/>
        <dbReference type="ChEBI" id="CHEBI:147286"/>
        <dbReference type="ChEBI" id="CHEBI:147287"/>
        <dbReference type="ChEBI" id="CHEBI:456216"/>
        <dbReference type="EC" id="6.3.5.3"/>
    </reaction>
</comment>
<comment type="pathway">
    <text evidence="1">Purine metabolism; IMP biosynthesis via de novo pathway; 5-amino-1-(5-phospho-D-ribosyl)imidazole from N(2)-formyl-N(1)-(5-phospho-D-ribosyl)glycinamide: step 1/2.</text>
</comment>
<comment type="subunit">
    <text evidence="1">Monomer. Part of the FGAM synthase complex composed of 1 PurL, 1 PurQ and 2 PurS subunits.</text>
</comment>
<comment type="subcellular location">
    <subcellularLocation>
        <location evidence="1">Cytoplasm</location>
    </subcellularLocation>
</comment>
<comment type="similarity">
    <text evidence="1">Belongs to the FGAMS family.</text>
</comment>
<organism>
    <name type="scientific">Pyrococcus furiosus (strain ATCC 43587 / DSM 3638 / JCM 8422 / Vc1)</name>
    <dbReference type="NCBI Taxonomy" id="186497"/>
    <lineage>
        <taxon>Archaea</taxon>
        <taxon>Methanobacteriati</taxon>
        <taxon>Methanobacteriota</taxon>
        <taxon>Thermococci</taxon>
        <taxon>Thermococcales</taxon>
        <taxon>Thermococcaceae</taxon>
        <taxon>Pyrococcus</taxon>
    </lineage>
</organism>
<protein>
    <recommendedName>
        <fullName evidence="1">Phosphoribosylformylglycinamidine synthase subunit PurL</fullName>
        <shortName evidence="1">FGAM synthase</shortName>
        <ecNumber evidence="1">6.3.5.3</ecNumber>
    </recommendedName>
    <alternativeName>
        <fullName evidence="1">Formylglycinamide ribonucleotide amidotransferase subunit II</fullName>
        <shortName evidence="1">FGAR amidotransferase II</shortName>
        <shortName evidence="1">FGAR-AT II</shortName>
    </alternativeName>
    <alternativeName>
        <fullName evidence="1">Glutamine amidotransferase PurL</fullName>
    </alternativeName>
    <alternativeName>
        <fullName evidence="1">Phosphoribosylformylglycinamidine synthase subunit II</fullName>
    </alternativeName>
</protein>
<evidence type="ECO:0000255" key="1">
    <source>
        <dbReference type="HAMAP-Rule" id="MF_00420"/>
    </source>
</evidence>
<gene>
    <name evidence="1" type="primary">purL</name>
    <name type="ordered locus">PF0199</name>
</gene>
<feature type="chain" id="PRO_0000100521" description="Phosphoribosylformylglycinamidine synthase subunit PurL">
    <location>
        <begin position="1"/>
        <end position="704"/>
    </location>
</feature>
<feature type="active site" evidence="1">
    <location>
        <position position="32"/>
    </location>
</feature>
<feature type="active site" description="Proton acceptor" evidence="1">
    <location>
        <position position="78"/>
    </location>
</feature>
<feature type="binding site" evidence="1">
    <location>
        <position position="35"/>
    </location>
    <ligand>
        <name>ATP</name>
        <dbReference type="ChEBI" id="CHEBI:30616"/>
    </ligand>
</feature>
<feature type="binding site" evidence="1">
    <location>
        <position position="76"/>
    </location>
    <ligand>
        <name>Mg(2+)</name>
        <dbReference type="ChEBI" id="CHEBI:18420"/>
        <label>1</label>
    </ligand>
</feature>
<feature type="binding site" evidence="1">
    <location>
        <begin position="77"/>
        <end position="80"/>
    </location>
    <ligand>
        <name>substrate</name>
    </ligand>
</feature>
<feature type="binding site" evidence="1">
    <location>
        <position position="99"/>
    </location>
    <ligand>
        <name>substrate</name>
    </ligand>
</feature>
<feature type="binding site" evidence="1">
    <location>
        <position position="100"/>
    </location>
    <ligand>
        <name>Mg(2+)</name>
        <dbReference type="ChEBI" id="CHEBI:18420"/>
        <label>2</label>
    </ligand>
</feature>
<feature type="binding site" evidence="1">
    <location>
        <position position="224"/>
    </location>
    <ligand>
        <name>substrate</name>
    </ligand>
</feature>
<feature type="binding site" evidence="1">
    <location>
        <position position="252"/>
    </location>
    <ligand>
        <name>Mg(2+)</name>
        <dbReference type="ChEBI" id="CHEBI:18420"/>
        <label>2</label>
    </ligand>
</feature>
<feature type="binding site" evidence="1">
    <location>
        <begin position="296"/>
        <end position="298"/>
    </location>
    <ligand>
        <name>substrate</name>
    </ligand>
</feature>
<feature type="binding site" evidence="1">
    <location>
        <position position="471"/>
    </location>
    <ligand>
        <name>ATP</name>
        <dbReference type="ChEBI" id="CHEBI:30616"/>
    </ligand>
</feature>
<feature type="binding site" evidence="1">
    <location>
        <position position="508"/>
    </location>
    <ligand>
        <name>ATP</name>
        <dbReference type="ChEBI" id="CHEBI:30616"/>
    </ligand>
</feature>
<feature type="binding site" evidence="1">
    <location>
        <position position="509"/>
    </location>
    <ligand>
        <name>Mg(2+)</name>
        <dbReference type="ChEBI" id="CHEBI:18420"/>
        <label>1</label>
    </ligand>
</feature>
<feature type="binding site" evidence="1">
    <location>
        <position position="511"/>
    </location>
    <ligand>
        <name>substrate</name>
    </ligand>
</feature>
<dbReference type="EC" id="6.3.5.3" evidence="1"/>
<dbReference type="EMBL" id="AE009950">
    <property type="protein sequence ID" value="AAL80323.1"/>
    <property type="molecule type" value="Genomic_DNA"/>
</dbReference>
<dbReference type="RefSeq" id="WP_011011312.1">
    <property type="nucleotide sequence ID" value="NZ_CP023154.1"/>
</dbReference>
<dbReference type="SMR" id="Q8U491"/>
<dbReference type="STRING" id="186497.PF0199"/>
<dbReference type="PaxDb" id="186497-PF0199"/>
<dbReference type="GeneID" id="41711990"/>
<dbReference type="KEGG" id="pfu:PF0199"/>
<dbReference type="PATRIC" id="fig|186497.12.peg.206"/>
<dbReference type="eggNOG" id="arCOG00641">
    <property type="taxonomic scope" value="Archaea"/>
</dbReference>
<dbReference type="HOGENOM" id="CLU_003100_0_1_2"/>
<dbReference type="OrthoDB" id="8251at2157"/>
<dbReference type="PhylomeDB" id="Q8U491"/>
<dbReference type="UniPathway" id="UPA00074">
    <property type="reaction ID" value="UER00128"/>
</dbReference>
<dbReference type="Proteomes" id="UP000001013">
    <property type="component" value="Chromosome"/>
</dbReference>
<dbReference type="GO" id="GO:0005737">
    <property type="term" value="C:cytoplasm"/>
    <property type="evidence" value="ECO:0007669"/>
    <property type="project" value="UniProtKB-SubCell"/>
</dbReference>
<dbReference type="GO" id="GO:0005524">
    <property type="term" value="F:ATP binding"/>
    <property type="evidence" value="ECO:0007669"/>
    <property type="project" value="UniProtKB-UniRule"/>
</dbReference>
<dbReference type="GO" id="GO:0000287">
    <property type="term" value="F:magnesium ion binding"/>
    <property type="evidence" value="ECO:0007669"/>
    <property type="project" value="UniProtKB-UniRule"/>
</dbReference>
<dbReference type="GO" id="GO:0004642">
    <property type="term" value="F:phosphoribosylformylglycinamidine synthase activity"/>
    <property type="evidence" value="ECO:0007669"/>
    <property type="project" value="UniProtKB-UniRule"/>
</dbReference>
<dbReference type="GO" id="GO:0006189">
    <property type="term" value="P:'de novo' IMP biosynthetic process"/>
    <property type="evidence" value="ECO:0007669"/>
    <property type="project" value="UniProtKB-UniRule"/>
</dbReference>
<dbReference type="CDD" id="cd02203">
    <property type="entry name" value="PurL_repeat1"/>
    <property type="match status" value="1"/>
</dbReference>
<dbReference type="CDD" id="cd02204">
    <property type="entry name" value="PurL_repeat2"/>
    <property type="match status" value="1"/>
</dbReference>
<dbReference type="FunFam" id="3.30.1330.10:FF:000004">
    <property type="entry name" value="Phosphoribosylformylglycinamidine synthase subunit PurL"/>
    <property type="match status" value="1"/>
</dbReference>
<dbReference type="Gene3D" id="3.90.650.10">
    <property type="entry name" value="PurM-like C-terminal domain"/>
    <property type="match status" value="2"/>
</dbReference>
<dbReference type="Gene3D" id="3.30.1330.10">
    <property type="entry name" value="PurM-like, N-terminal domain"/>
    <property type="match status" value="2"/>
</dbReference>
<dbReference type="HAMAP" id="MF_00420">
    <property type="entry name" value="PurL_2"/>
    <property type="match status" value="1"/>
</dbReference>
<dbReference type="InterPro" id="IPR010074">
    <property type="entry name" value="PRibForGlyAmidine_synth_PurL"/>
</dbReference>
<dbReference type="InterPro" id="IPR041609">
    <property type="entry name" value="PurL_linker"/>
</dbReference>
<dbReference type="InterPro" id="IPR010918">
    <property type="entry name" value="PurM-like_C_dom"/>
</dbReference>
<dbReference type="InterPro" id="IPR036676">
    <property type="entry name" value="PurM-like_C_sf"/>
</dbReference>
<dbReference type="InterPro" id="IPR016188">
    <property type="entry name" value="PurM-like_N"/>
</dbReference>
<dbReference type="InterPro" id="IPR036921">
    <property type="entry name" value="PurM-like_N_sf"/>
</dbReference>
<dbReference type="NCBIfam" id="TIGR01736">
    <property type="entry name" value="FGAM_synth_II"/>
    <property type="match status" value="1"/>
</dbReference>
<dbReference type="NCBIfam" id="NF002290">
    <property type="entry name" value="PRK01213.1"/>
    <property type="match status" value="1"/>
</dbReference>
<dbReference type="PANTHER" id="PTHR43555">
    <property type="entry name" value="PHOSPHORIBOSYLFORMYLGLYCINAMIDINE SYNTHASE SUBUNIT PURL"/>
    <property type="match status" value="1"/>
</dbReference>
<dbReference type="PANTHER" id="PTHR43555:SF1">
    <property type="entry name" value="PHOSPHORIBOSYLFORMYLGLYCINAMIDINE SYNTHASE SUBUNIT PURL"/>
    <property type="match status" value="1"/>
</dbReference>
<dbReference type="Pfam" id="PF00586">
    <property type="entry name" value="AIRS"/>
    <property type="match status" value="2"/>
</dbReference>
<dbReference type="Pfam" id="PF02769">
    <property type="entry name" value="AIRS_C"/>
    <property type="match status" value="2"/>
</dbReference>
<dbReference type="Pfam" id="PF18072">
    <property type="entry name" value="FGAR-AT_linker"/>
    <property type="match status" value="1"/>
</dbReference>
<dbReference type="PIRSF" id="PIRSF001587">
    <property type="entry name" value="FGAM_synthase_II"/>
    <property type="match status" value="1"/>
</dbReference>
<dbReference type="SUPFAM" id="SSF56042">
    <property type="entry name" value="PurM C-terminal domain-like"/>
    <property type="match status" value="2"/>
</dbReference>
<dbReference type="SUPFAM" id="SSF55326">
    <property type="entry name" value="PurM N-terminal domain-like"/>
    <property type="match status" value="2"/>
</dbReference>